<accession>Q67SI3</accession>
<proteinExistence type="inferred from homology"/>
<dbReference type="EMBL" id="AP006840">
    <property type="protein sequence ID" value="BAD39360.1"/>
    <property type="molecule type" value="Genomic_DNA"/>
</dbReference>
<dbReference type="RefSeq" id="WP_011194509.1">
    <property type="nucleotide sequence ID" value="NC_006177.1"/>
</dbReference>
<dbReference type="SMR" id="Q67SI3"/>
<dbReference type="STRING" id="292459.STH375"/>
<dbReference type="KEGG" id="sth:STH375"/>
<dbReference type="eggNOG" id="COG0850">
    <property type="taxonomic scope" value="Bacteria"/>
</dbReference>
<dbReference type="HOGENOM" id="CLU_048711_0_0_9"/>
<dbReference type="OrthoDB" id="9790810at2"/>
<dbReference type="Proteomes" id="UP000000417">
    <property type="component" value="Chromosome"/>
</dbReference>
<dbReference type="GO" id="GO:0000902">
    <property type="term" value="P:cell morphogenesis"/>
    <property type="evidence" value="ECO:0007669"/>
    <property type="project" value="InterPro"/>
</dbReference>
<dbReference type="GO" id="GO:0000917">
    <property type="term" value="P:division septum assembly"/>
    <property type="evidence" value="ECO:0007669"/>
    <property type="project" value="UniProtKB-KW"/>
</dbReference>
<dbReference type="GO" id="GO:1901891">
    <property type="term" value="P:regulation of cell septum assembly"/>
    <property type="evidence" value="ECO:0007669"/>
    <property type="project" value="InterPro"/>
</dbReference>
<dbReference type="Gene3D" id="2.160.20.70">
    <property type="match status" value="1"/>
</dbReference>
<dbReference type="Gene3D" id="3.30.160.540">
    <property type="match status" value="1"/>
</dbReference>
<dbReference type="HAMAP" id="MF_00267">
    <property type="entry name" value="MinC"/>
    <property type="match status" value="1"/>
</dbReference>
<dbReference type="InterPro" id="IPR016098">
    <property type="entry name" value="CAP/MinC_C"/>
</dbReference>
<dbReference type="InterPro" id="IPR013033">
    <property type="entry name" value="MinC"/>
</dbReference>
<dbReference type="InterPro" id="IPR036145">
    <property type="entry name" value="MinC_C_sf"/>
</dbReference>
<dbReference type="InterPro" id="IPR055219">
    <property type="entry name" value="MinC_N_1"/>
</dbReference>
<dbReference type="InterPro" id="IPR005526">
    <property type="entry name" value="Septum_form_inhib_MinC_C"/>
</dbReference>
<dbReference type="NCBIfam" id="TIGR01222">
    <property type="entry name" value="minC"/>
    <property type="match status" value="1"/>
</dbReference>
<dbReference type="PANTHER" id="PTHR34108">
    <property type="entry name" value="SEPTUM SITE-DETERMINING PROTEIN MINC"/>
    <property type="match status" value="1"/>
</dbReference>
<dbReference type="PANTHER" id="PTHR34108:SF1">
    <property type="entry name" value="SEPTUM SITE-DETERMINING PROTEIN MINC"/>
    <property type="match status" value="1"/>
</dbReference>
<dbReference type="Pfam" id="PF03775">
    <property type="entry name" value="MinC_C"/>
    <property type="match status" value="1"/>
</dbReference>
<dbReference type="Pfam" id="PF22642">
    <property type="entry name" value="MinC_N_1"/>
    <property type="match status" value="1"/>
</dbReference>
<dbReference type="SUPFAM" id="SSF63848">
    <property type="entry name" value="Cell-division inhibitor MinC, C-terminal domain"/>
    <property type="match status" value="1"/>
</dbReference>
<reference key="1">
    <citation type="journal article" date="2004" name="Nucleic Acids Res.">
        <title>Genome sequence of Symbiobacterium thermophilum, an uncultivable bacterium that depends on microbial commensalism.</title>
        <authorList>
            <person name="Ueda K."/>
            <person name="Yamashita A."/>
            <person name="Ishikawa J."/>
            <person name="Shimada M."/>
            <person name="Watsuji T."/>
            <person name="Morimura K."/>
            <person name="Ikeda H."/>
            <person name="Hattori M."/>
            <person name="Beppu T."/>
        </authorList>
    </citation>
    <scope>NUCLEOTIDE SEQUENCE [LARGE SCALE GENOMIC DNA]</scope>
    <source>
        <strain>DSM 24528 / JCM 14929 / IAM 14863 / T</strain>
    </source>
</reference>
<sequence>MRQDIVIRGTTRTGLLLLLPDEGEFSAVLERLAERLASSGRFFVGGRVQVHVGNRRLSPEDREALEQTLQRSGMVLLSVKEGGDPLAEVQAPEAGAPSAPPPPAGNTLVVTKTVRSGQEIRHDGDVIILGDVNPGAVVVATGHIVVMGALRGVAHAGCTGNRTAIVAATKLRPTQLRIAEVIGRAPDGDAPQSYPEVARIRGDLIVVEASAEKRQVSALEAVGAKEDR</sequence>
<evidence type="ECO:0000255" key="1">
    <source>
        <dbReference type="HAMAP-Rule" id="MF_00267"/>
    </source>
</evidence>
<name>MINC_SYMTH</name>
<feature type="chain" id="PRO_1000047869" description="Probable septum site-determining protein MinC">
    <location>
        <begin position="1"/>
        <end position="228"/>
    </location>
</feature>
<gene>
    <name evidence="1" type="primary">minC</name>
    <name type="ordered locus">STH375</name>
</gene>
<keyword id="KW-0131">Cell cycle</keyword>
<keyword id="KW-0132">Cell division</keyword>
<keyword id="KW-1185">Reference proteome</keyword>
<keyword id="KW-0717">Septation</keyword>
<comment type="function">
    <text evidence="1">Cell division inhibitor that blocks the formation of polar Z ring septums. Rapidly oscillates between the poles of the cell to destabilize FtsZ filaments that have formed before they mature into polar Z rings. Prevents FtsZ polymerization.</text>
</comment>
<comment type="subunit">
    <text evidence="1">Interacts with MinD and FtsZ.</text>
</comment>
<comment type="similarity">
    <text evidence="1">Belongs to the MinC family.</text>
</comment>
<organism>
    <name type="scientific">Symbiobacterium thermophilum (strain DSM 24528 / JCM 14929 / IAM 14863 / T)</name>
    <dbReference type="NCBI Taxonomy" id="292459"/>
    <lineage>
        <taxon>Bacteria</taxon>
        <taxon>Bacillati</taxon>
        <taxon>Bacillota</taxon>
        <taxon>Clostridia</taxon>
        <taxon>Eubacteriales</taxon>
        <taxon>Symbiobacteriaceae</taxon>
        <taxon>Symbiobacterium</taxon>
    </lineage>
</organism>
<protein>
    <recommendedName>
        <fullName evidence="1">Probable septum site-determining protein MinC</fullName>
    </recommendedName>
</protein>